<gene>
    <name evidence="1" type="primary">ubiE</name>
    <name type="ordered locus">XfasM23_0740</name>
</gene>
<dbReference type="EC" id="2.1.1.163" evidence="1"/>
<dbReference type="EC" id="2.1.1.201" evidence="1"/>
<dbReference type="EMBL" id="CP001011">
    <property type="protein sequence ID" value="ACB92180.1"/>
    <property type="molecule type" value="Genomic_DNA"/>
</dbReference>
<dbReference type="RefSeq" id="WP_004089034.1">
    <property type="nucleotide sequence ID" value="NC_010577.1"/>
</dbReference>
<dbReference type="SMR" id="B2IA21"/>
<dbReference type="GeneID" id="93904484"/>
<dbReference type="KEGG" id="xfn:XfasM23_0740"/>
<dbReference type="HOGENOM" id="CLU_037990_0_0_6"/>
<dbReference type="UniPathway" id="UPA00079">
    <property type="reaction ID" value="UER00169"/>
</dbReference>
<dbReference type="UniPathway" id="UPA00232"/>
<dbReference type="Proteomes" id="UP000001698">
    <property type="component" value="Chromosome"/>
</dbReference>
<dbReference type="GO" id="GO:0008425">
    <property type="term" value="F:2-methoxy-6-polyprenyl-1,4-benzoquinol methyltransferase activity"/>
    <property type="evidence" value="ECO:0007669"/>
    <property type="project" value="UniProtKB-UniRule"/>
</dbReference>
<dbReference type="GO" id="GO:0043770">
    <property type="term" value="F:demethylmenaquinone methyltransferase activity"/>
    <property type="evidence" value="ECO:0007669"/>
    <property type="project" value="UniProtKB-UniRule"/>
</dbReference>
<dbReference type="GO" id="GO:0009060">
    <property type="term" value="P:aerobic respiration"/>
    <property type="evidence" value="ECO:0007669"/>
    <property type="project" value="UniProtKB-UniRule"/>
</dbReference>
<dbReference type="GO" id="GO:0009234">
    <property type="term" value="P:menaquinone biosynthetic process"/>
    <property type="evidence" value="ECO:0007669"/>
    <property type="project" value="UniProtKB-UniRule"/>
</dbReference>
<dbReference type="GO" id="GO:0032259">
    <property type="term" value="P:methylation"/>
    <property type="evidence" value="ECO:0007669"/>
    <property type="project" value="UniProtKB-KW"/>
</dbReference>
<dbReference type="CDD" id="cd02440">
    <property type="entry name" value="AdoMet_MTases"/>
    <property type="match status" value="1"/>
</dbReference>
<dbReference type="Gene3D" id="3.40.50.150">
    <property type="entry name" value="Vaccinia Virus protein VP39"/>
    <property type="match status" value="1"/>
</dbReference>
<dbReference type="HAMAP" id="MF_01813">
    <property type="entry name" value="MenG_UbiE_methyltr"/>
    <property type="match status" value="1"/>
</dbReference>
<dbReference type="InterPro" id="IPR029063">
    <property type="entry name" value="SAM-dependent_MTases_sf"/>
</dbReference>
<dbReference type="InterPro" id="IPR004033">
    <property type="entry name" value="UbiE/COQ5_MeTrFase"/>
</dbReference>
<dbReference type="InterPro" id="IPR023576">
    <property type="entry name" value="UbiE/COQ5_MeTrFase_CS"/>
</dbReference>
<dbReference type="NCBIfam" id="TIGR01934">
    <property type="entry name" value="MenG_MenH_UbiE"/>
    <property type="match status" value="1"/>
</dbReference>
<dbReference type="NCBIfam" id="NF001242">
    <property type="entry name" value="PRK00216.1-3"/>
    <property type="match status" value="1"/>
</dbReference>
<dbReference type="NCBIfam" id="NF001244">
    <property type="entry name" value="PRK00216.1-5"/>
    <property type="match status" value="1"/>
</dbReference>
<dbReference type="PANTHER" id="PTHR43591:SF24">
    <property type="entry name" value="2-METHOXY-6-POLYPRENYL-1,4-BENZOQUINOL METHYLASE, MITOCHONDRIAL"/>
    <property type="match status" value="1"/>
</dbReference>
<dbReference type="PANTHER" id="PTHR43591">
    <property type="entry name" value="METHYLTRANSFERASE"/>
    <property type="match status" value="1"/>
</dbReference>
<dbReference type="Pfam" id="PF01209">
    <property type="entry name" value="Ubie_methyltran"/>
    <property type="match status" value="1"/>
</dbReference>
<dbReference type="SUPFAM" id="SSF53335">
    <property type="entry name" value="S-adenosyl-L-methionine-dependent methyltransferases"/>
    <property type="match status" value="1"/>
</dbReference>
<dbReference type="PROSITE" id="PS51608">
    <property type="entry name" value="SAM_MT_UBIE"/>
    <property type="match status" value="1"/>
</dbReference>
<dbReference type="PROSITE" id="PS01183">
    <property type="entry name" value="UBIE_1"/>
    <property type="match status" value="1"/>
</dbReference>
<dbReference type="PROSITE" id="PS01184">
    <property type="entry name" value="UBIE_2"/>
    <property type="match status" value="1"/>
</dbReference>
<reference key="1">
    <citation type="journal article" date="2010" name="J. Bacteriol.">
        <title>Whole genome sequences of two Xylella fastidiosa strains (M12 and M23) causing almond leaf scorch disease in California.</title>
        <authorList>
            <person name="Chen J."/>
            <person name="Xie G."/>
            <person name="Han S."/>
            <person name="Chertkov O."/>
            <person name="Sims D."/>
            <person name="Civerolo E.L."/>
        </authorList>
    </citation>
    <scope>NUCLEOTIDE SEQUENCE [LARGE SCALE GENOMIC DNA]</scope>
    <source>
        <strain>M23</strain>
    </source>
</reference>
<name>UBIE_XYLF2</name>
<feature type="chain" id="PRO_1000187822" description="Ubiquinone/menaquinone biosynthesis C-methyltransferase UbiE">
    <location>
        <begin position="1"/>
        <end position="253"/>
    </location>
</feature>
<feature type="binding site" evidence="1">
    <location>
        <position position="76"/>
    </location>
    <ligand>
        <name>S-adenosyl-L-methionine</name>
        <dbReference type="ChEBI" id="CHEBI:59789"/>
    </ligand>
</feature>
<feature type="binding site" evidence="1">
    <location>
        <position position="97"/>
    </location>
    <ligand>
        <name>S-adenosyl-L-methionine</name>
        <dbReference type="ChEBI" id="CHEBI:59789"/>
    </ligand>
</feature>
<feature type="binding site" evidence="1">
    <location>
        <begin position="125"/>
        <end position="126"/>
    </location>
    <ligand>
        <name>S-adenosyl-L-methionine</name>
        <dbReference type="ChEBI" id="CHEBI:59789"/>
    </ligand>
</feature>
<feature type="binding site" evidence="1">
    <location>
        <position position="142"/>
    </location>
    <ligand>
        <name>S-adenosyl-L-methionine</name>
        <dbReference type="ChEBI" id="CHEBI:59789"/>
    </ligand>
</feature>
<keyword id="KW-0474">Menaquinone biosynthesis</keyword>
<keyword id="KW-0489">Methyltransferase</keyword>
<keyword id="KW-0949">S-adenosyl-L-methionine</keyword>
<keyword id="KW-0808">Transferase</keyword>
<keyword id="KW-0831">Ubiquinone biosynthesis</keyword>
<sequence length="253" mass="28254">MSESSEKTSTTHFGFRQVAAKDKKTLVAEVFTSVSRRYDLMNDLMSLGIHRAWKRYFVATAQVKSGDRVLDLAGGTGDIAMLLKNRVGAEGSIVLGDINASMLSVGRDRLIDRGVVARLDYVQCNAEALPFQDKCFDLVTMSFGLRNVTDKDAALREMFRVLKVGGQARVLEFSAVTAEWFKPIYDFHSFQVLPRLGRLFARDAASYRYLAESIRKHPPQEELQAMMGSAGFERCGYRNLTGGIVAIHSGYKY</sequence>
<protein>
    <recommendedName>
        <fullName evidence="1">Ubiquinone/menaquinone biosynthesis C-methyltransferase UbiE</fullName>
        <ecNumber evidence="1">2.1.1.163</ecNumber>
        <ecNumber evidence="1">2.1.1.201</ecNumber>
    </recommendedName>
    <alternativeName>
        <fullName evidence="1">2-methoxy-6-polyprenyl-1,4-benzoquinol methylase</fullName>
    </alternativeName>
    <alternativeName>
        <fullName evidence="1">Demethylmenaquinone methyltransferase</fullName>
    </alternativeName>
</protein>
<proteinExistence type="inferred from homology"/>
<evidence type="ECO:0000255" key="1">
    <source>
        <dbReference type="HAMAP-Rule" id="MF_01813"/>
    </source>
</evidence>
<accession>B2IA21</accession>
<comment type="function">
    <text evidence="1">Methyltransferase required for the conversion of demethylmenaquinol (DMKH2) to menaquinol (MKH2) and the conversion of 2-polyprenyl-6-methoxy-1,4-benzoquinol (DDMQH2) to 2-polyprenyl-3-methyl-6-methoxy-1,4-benzoquinol (DMQH2).</text>
</comment>
<comment type="catalytic activity">
    <reaction evidence="1">
        <text>a 2-demethylmenaquinol + S-adenosyl-L-methionine = a menaquinol + S-adenosyl-L-homocysteine + H(+)</text>
        <dbReference type="Rhea" id="RHEA:42640"/>
        <dbReference type="Rhea" id="RHEA-COMP:9539"/>
        <dbReference type="Rhea" id="RHEA-COMP:9563"/>
        <dbReference type="ChEBI" id="CHEBI:15378"/>
        <dbReference type="ChEBI" id="CHEBI:18151"/>
        <dbReference type="ChEBI" id="CHEBI:55437"/>
        <dbReference type="ChEBI" id="CHEBI:57856"/>
        <dbReference type="ChEBI" id="CHEBI:59789"/>
        <dbReference type="EC" id="2.1.1.163"/>
    </reaction>
</comment>
<comment type="catalytic activity">
    <reaction evidence="1">
        <text>a 2-methoxy-6-(all-trans-polyprenyl)benzene-1,4-diol + S-adenosyl-L-methionine = a 5-methoxy-2-methyl-3-(all-trans-polyprenyl)benzene-1,4-diol + S-adenosyl-L-homocysteine + H(+)</text>
        <dbReference type="Rhea" id="RHEA:28286"/>
        <dbReference type="Rhea" id="RHEA-COMP:10858"/>
        <dbReference type="Rhea" id="RHEA-COMP:10859"/>
        <dbReference type="ChEBI" id="CHEBI:15378"/>
        <dbReference type="ChEBI" id="CHEBI:57856"/>
        <dbReference type="ChEBI" id="CHEBI:59789"/>
        <dbReference type="ChEBI" id="CHEBI:84166"/>
        <dbReference type="ChEBI" id="CHEBI:84167"/>
        <dbReference type="EC" id="2.1.1.201"/>
    </reaction>
</comment>
<comment type="pathway">
    <text evidence="1">Quinol/quinone metabolism; menaquinone biosynthesis; menaquinol from 1,4-dihydroxy-2-naphthoate: step 2/2.</text>
</comment>
<comment type="pathway">
    <text evidence="1">Cofactor biosynthesis; ubiquinone biosynthesis.</text>
</comment>
<comment type="similarity">
    <text evidence="1">Belongs to the class I-like SAM-binding methyltransferase superfamily. MenG/UbiE family.</text>
</comment>
<organism>
    <name type="scientific">Xylella fastidiosa (strain M23)</name>
    <dbReference type="NCBI Taxonomy" id="405441"/>
    <lineage>
        <taxon>Bacteria</taxon>
        <taxon>Pseudomonadati</taxon>
        <taxon>Pseudomonadota</taxon>
        <taxon>Gammaproteobacteria</taxon>
        <taxon>Lysobacterales</taxon>
        <taxon>Lysobacteraceae</taxon>
        <taxon>Xylella</taxon>
    </lineage>
</organism>